<proteinExistence type="evidence at transcript level"/>
<accession>Q91ZR7</accession>
<accession>Q5RKL6</accession>
<feature type="chain" id="PRO_0000337752" description="Probable UDP-sugar transporter protein SLC35A4">
    <location>
        <begin position="1"/>
        <end position="324"/>
    </location>
</feature>
<feature type="topological domain" description="Cytoplasmic" evidence="1">
    <location>
        <begin position="1"/>
        <end position="18"/>
    </location>
</feature>
<feature type="transmembrane region" description="Helical" evidence="2">
    <location>
        <begin position="19"/>
        <end position="39"/>
    </location>
</feature>
<feature type="topological domain" description="Lumenal" evidence="1">
    <location>
        <begin position="40"/>
        <end position="52"/>
    </location>
</feature>
<feature type="transmembrane region" description="Helical" evidence="2">
    <location>
        <begin position="53"/>
        <end position="73"/>
    </location>
</feature>
<feature type="topological domain" description="Cytoplasmic" evidence="1">
    <location>
        <begin position="74"/>
        <end position="85"/>
    </location>
</feature>
<feature type="transmembrane region" description="Helical" evidence="2">
    <location>
        <begin position="86"/>
        <end position="106"/>
    </location>
</feature>
<feature type="topological domain" description="Lumenal" evidence="1">
    <location>
        <begin position="107"/>
        <end position="142"/>
    </location>
</feature>
<feature type="transmembrane region" description="Helical" evidence="2">
    <location>
        <begin position="143"/>
        <end position="163"/>
    </location>
</feature>
<feature type="topological domain" description="Cytoplasmic" evidence="1">
    <location>
        <begin position="164"/>
        <end position="180"/>
    </location>
</feature>
<feature type="transmembrane region" description="Helical" evidence="2">
    <location>
        <begin position="181"/>
        <end position="201"/>
    </location>
</feature>
<feature type="topological domain" description="Lumenal" evidence="1">
    <location>
        <begin position="202"/>
        <end position="214"/>
    </location>
</feature>
<feature type="transmembrane region" description="Helical" evidence="2">
    <location>
        <begin position="215"/>
        <end position="235"/>
    </location>
</feature>
<feature type="topological domain" description="Cytoplasmic" evidence="1">
    <location>
        <begin position="236"/>
        <end position="248"/>
    </location>
</feature>
<feature type="transmembrane region" description="Helical" evidence="2">
    <location>
        <begin position="249"/>
        <end position="271"/>
    </location>
</feature>
<feature type="topological domain" description="Lumenal" evidence="1">
    <location>
        <begin position="272"/>
        <end position="279"/>
    </location>
</feature>
<feature type="transmembrane region" description="Helical" evidence="2">
    <location>
        <begin position="280"/>
        <end position="300"/>
    </location>
</feature>
<feature type="topological domain" description="Cytoplasmic" evidence="1">
    <location>
        <begin position="301"/>
        <end position="324"/>
    </location>
</feature>
<feature type="sequence conflict" description="In Ref. 1; AAK96221." evidence="5" ref="1">
    <original>Y</original>
    <variation>C</variation>
    <location>
        <position position="130"/>
    </location>
</feature>
<feature type="sequence conflict" description="In Ref. 1; AAK96221." evidence="5" ref="1">
    <original>R</original>
    <variation>C</variation>
    <location>
        <position position="137"/>
    </location>
</feature>
<feature type="sequence conflict" description="In Ref. 1; AAK96221." evidence="5" ref="1">
    <original>Q</original>
    <variation>H</variation>
    <location>
        <position position="260"/>
    </location>
</feature>
<feature type="sequence conflict" description="In Ref. 1; AAK96221." evidence="5" ref="1">
    <original>S</original>
    <variation>I</variation>
    <location>
        <position position="275"/>
    </location>
</feature>
<keyword id="KW-0333">Golgi apparatus</keyword>
<keyword id="KW-0472">Membrane</keyword>
<keyword id="KW-1185">Reference proteome</keyword>
<keyword id="KW-0762">Sugar transport</keyword>
<keyword id="KW-0812">Transmembrane</keyword>
<keyword id="KW-1133">Transmembrane helix</keyword>
<keyword id="KW-0813">Transport</keyword>
<name>S35A4_RAT</name>
<dbReference type="EMBL" id="AF406814">
    <property type="protein sequence ID" value="AAK96221.1"/>
    <property type="molecule type" value="mRNA"/>
</dbReference>
<dbReference type="EMBL" id="BC085695">
    <property type="protein sequence ID" value="AAH85695.1"/>
    <property type="molecule type" value="mRNA"/>
</dbReference>
<dbReference type="EMBL" id="BC086986">
    <property type="protein sequence ID" value="AAH86986.1"/>
    <property type="molecule type" value="mRNA"/>
</dbReference>
<dbReference type="RefSeq" id="NP_001419676.1">
    <property type="nucleotide sequence ID" value="NM_001432747.1"/>
</dbReference>
<dbReference type="RefSeq" id="NP_001419677.1">
    <property type="nucleotide sequence ID" value="NM_001432748.1"/>
</dbReference>
<dbReference type="RefSeq" id="NP_671481.2">
    <property type="nucleotide sequence ID" value="NM_147140.3"/>
</dbReference>
<dbReference type="RefSeq" id="XP_006254590.1">
    <property type="nucleotide sequence ID" value="XM_006254528.2"/>
</dbReference>
<dbReference type="RefSeq" id="XP_006254591.1">
    <property type="nucleotide sequence ID" value="XM_006254529.3"/>
</dbReference>
<dbReference type="RefSeq" id="XP_008770241.1">
    <property type="nucleotide sequence ID" value="XM_008772019.2"/>
</dbReference>
<dbReference type="SMR" id="Q91ZR7"/>
<dbReference type="FunCoup" id="Q91ZR7">
    <property type="interactions" value="1027"/>
</dbReference>
<dbReference type="STRING" id="10116.ENSRNOP00000003878"/>
<dbReference type="PhosphoSitePlus" id="Q91ZR7"/>
<dbReference type="PaxDb" id="10116-ENSRNOP00000003878"/>
<dbReference type="Ensembl" id="ENSRNOT00000003878.5">
    <property type="protein sequence ID" value="ENSRNOP00000003878.4"/>
    <property type="gene ID" value="ENSRNOG00000002908.6"/>
</dbReference>
<dbReference type="Ensembl" id="ENSRNOT00000100525.1">
    <property type="protein sequence ID" value="ENSRNOP00000096880.1"/>
    <property type="gene ID" value="ENSRNOG00000002908.6"/>
</dbReference>
<dbReference type="Ensembl" id="ENSRNOT00000109501.1">
    <property type="protein sequence ID" value="ENSRNOP00000079324.1"/>
    <property type="gene ID" value="ENSRNOG00000002908.6"/>
</dbReference>
<dbReference type="GeneID" id="257647"/>
<dbReference type="KEGG" id="rno:257647"/>
<dbReference type="UCSC" id="RGD:628792">
    <property type="organism name" value="rat"/>
</dbReference>
<dbReference type="AGR" id="RGD:628792"/>
<dbReference type="CTD" id="113829"/>
<dbReference type="RGD" id="628792">
    <property type="gene designation" value="Slc35a4"/>
</dbReference>
<dbReference type="eggNOG" id="KOG2234">
    <property type="taxonomic scope" value="Eukaryota"/>
</dbReference>
<dbReference type="GeneTree" id="ENSGT00950000182827"/>
<dbReference type="HOGENOM" id="CLU_024645_5_1_1"/>
<dbReference type="InParanoid" id="Q91ZR7"/>
<dbReference type="OMA" id="SSCVVMI"/>
<dbReference type="OrthoDB" id="419167at2759"/>
<dbReference type="PhylomeDB" id="Q91ZR7"/>
<dbReference type="TreeFam" id="TF315345"/>
<dbReference type="Proteomes" id="UP000002494">
    <property type="component" value="Chromosome 18"/>
</dbReference>
<dbReference type="Bgee" id="ENSRNOG00000002908">
    <property type="expression patterns" value="Expressed in skeletal muscle tissue and 19 other cell types or tissues"/>
</dbReference>
<dbReference type="GO" id="GO:0005794">
    <property type="term" value="C:Golgi apparatus"/>
    <property type="evidence" value="ECO:0000314"/>
    <property type="project" value="UniProtKB"/>
</dbReference>
<dbReference type="GO" id="GO:0000139">
    <property type="term" value="C:Golgi membrane"/>
    <property type="evidence" value="ECO:0000250"/>
    <property type="project" value="UniProtKB"/>
</dbReference>
<dbReference type="GO" id="GO:0005743">
    <property type="term" value="C:mitochondrial inner membrane"/>
    <property type="evidence" value="ECO:0000266"/>
    <property type="project" value="RGD"/>
</dbReference>
<dbReference type="GO" id="GO:0015165">
    <property type="term" value="F:pyrimidine nucleotide-sugar transmembrane transporter activity"/>
    <property type="evidence" value="ECO:0007669"/>
    <property type="project" value="InterPro"/>
</dbReference>
<dbReference type="GO" id="GO:0022857">
    <property type="term" value="F:transmembrane transporter activity"/>
    <property type="evidence" value="ECO:0000318"/>
    <property type="project" value="GO_Central"/>
</dbReference>
<dbReference type="GO" id="GO:1901857">
    <property type="term" value="P:positive regulation of cellular respiration"/>
    <property type="evidence" value="ECO:0000266"/>
    <property type="project" value="RGD"/>
</dbReference>
<dbReference type="GO" id="GO:0032056">
    <property type="term" value="P:positive regulation of translation in response to stress"/>
    <property type="evidence" value="ECO:0000266"/>
    <property type="project" value="RGD"/>
</dbReference>
<dbReference type="GO" id="GO:0055085">
    <property type="term" value="P:transmembrane transport"/>
    <property type="evidence" value="ECO:0000318"/>
    <property type="project" value="GO_Central"/>
</dbReference>
<dbReference type="InterPro" id="IPR007271">
    <property type="entry name" value="Nuc_sug_transpt"/>
</dbReference>
<dbReference type="PANTHER" id="PTHR10231">
    <property type="entry name" value="NUCLEOTIDE-SUGAR TRANSMEMBRANE TRANSPORTER"/>
    <property type="match status" value="1"/>
</dbReference>
<dbReference type="Pfam" id="PF04142">
    <property type="entry name" value="Nuc_sug_transp"/>
    <property type="match status" value="1"/>
</dbReference>
<dbReference type="PIRSF" id="PIRSF005799">
    <property type="entry name" value="UDP-gal_transpt"/>
    <property type="match status" value="1"/>
</dbReference>
<dbReference type="SUPFAM" id="SSF103481">
    <property type="entry name" value="Multidrug resistance efflux transporter EmrE"/>
    <property type="match status" value="1"/>
</dbReference>
<sequence>MSVEDGGMPGLARPKQARWTLMLFLSTAMYGAHAPFLALCHVDGRVPFRPSSAVLLTELTKLLLCAFSLLVGWQTWPQGTPPWRQAAPFALSALLYGANNNLVIYLQRYMDPSTYQVLSNLKIGSTALLYCLCLGHRLSARQGLALLLLMAAGACYASGGFQEPGNTLPGPRSAAGARPMPLHITPLGLLLLILYCLISGLSSVYTELIMKRQRLPLALQNLFLYTFGVILNLGLYAGSGPGPGFLEGFSGWAVLVVLNQAVNGLLMSAVMKHGSSITRLFIVSCSLVVNAVLSAVLLQLQLTATFFLAALLIGLAVCLYYGSP</sequence>
<reference key="1">
    <citation type="journal article" date="2002" name="J. Neurobiol.">
        <title>Cloning of the cDNA and mRNA expression of CLRP, a complex leucine repeat protein of the Golgi apparatus expressed by specific neurons of the rat brain.</title>
        <authorList>
            <person name="Perez-Marquez J."/>
            <person name="Reguillo B."/>
            <person name="Paniagua R."/>
        </authorList>
    </citation>
    <scope>NUCLEOTIDE SEQUENCE [MRNA]</scope>
    <scope>SUBCELLULAR LOCATION</scope>
    <scope>TISSUE SPECIFICITY</scope>
    <scope>DEVELOPMENTAL STAGE</scope>
</reference>
<reference key="2">
    <citation type="journal article" date="2004" name="Genome Res.">
        <title>The status, quality, and expansion of the NIH full-length cDNA project: the Mammalian Gene Collection (MGC).</title>
        <authorList>
            <consortium name="The MGC Project Team"/>
        </authorList>
    </citation>
    <scope>NUCLEOTIDE SEQUENCE [LARGE SCALE MRNA]</scope>
    <source>
        <tissue>Heart</tissue>
    </source>
</reference>
<comment type="function">
    <text evidence="1">Mediates the transport of CDP-ribitol (By similarity). Does not exhibit CMP-sialic acid, UDP-galactose and UDP-N-acetylglucosamine transport activity (By similarity).</text>
</comment>
<comment type="catalytic activity">
    <reaction evidence="1">
        <text>CDP-L-ribitol(in) + CDP(out) = CDP-L-ribitol(out) + CDP(in)</text>
        <dbReference type="Rhea" id="RHEA:71579"/>
        <dbReference type="ChEBI" id="CHEBI:57608"/>
        <dbReference type="ChEBI" id="CHEBI:58069"/>
    </reaction>
</comment>
<comment type="subunit">
    <text evidence="1">Found in a complex with SLC35A2 and SLC35A3.</text>
</comment>
<comment type="subcellular location">
    <subcellularLocation>
        <location evidence="3">Golgi apparatus membrane</location>
        <topology evidence="2">Multi-pass membrane protein</topology>
    </subcellularLocation>
</comment>
<comment type="tissue specificity">
    <text evidence="3">Expressed in the kidney, lung, testis, and prostate. Expressed in the brain by sets of neurons, such as the pyramidal cells of the cortex, the Purkinje cells of the cerebellum, and the motoneurons of the brainstem.</text>
</comment>
<comment type="developmental stage">
    <text evidence="3">Expressed at 15 dpc. Expression is maintained until postnatal day 10 and decreases in adults.</text>
</comment>
<comment type="similarity">
    <text evidence="5">Belongs to the nucleotide-sugar transporter family. SLC35A subfamily.</text>
</comment>
<gene>
    <name evidence="6" type="primary">Slc35a4</name>
    <name evidence="4" type="synonym">Clrp</name>
</gene>
<evidence type="ECO:0000250" key="1">
    <source>
        <dbReference type="UniProtKB" id="Q96G79"/>
    </source>
</evidence>
<evidence type="ECO:0000255" key="2"/>
<evidence type="ECO:0000269" key="3">
    <source>
    </source>
</evidence>
<evidence type="ECO:0000303" key="4">
    <source>
    </source>
</evidence>
<evidence type="ECO:0000305" key="5"/>
<evidence type="ECO:0000312" key="6">
    <source>
        <dbReference type="RGD" id="628792"/>
    </source>
</evidence>
<organism>
    <name type="scientific">Rattus norvegicus</name>
    <name type="common">Rat</name>
    <dbReference type="NCBI Taxonomy" id="10116"/>
    <lineage>
        <taxon>Eukaryota</taxon>
        <taxon>Metazoa</taxon>
        <taxon>Chordata</taxon>
        <taxon>Craniata</taxon>
        <taxon>Vertebrata</taxon>
        <taxon>Euteleostomi</taxon>
        <taxon>Mammalia</taxon>
        <taxon>Eutheria</taxon>
        <taxon>Euarchontoglires</taxon>
        <taxon>Glires</taxon>
        <taxon>Rodentia</taxon>
        <taxon>Myomorpha</taxon>
        <taxon>Muroidea</taxon>
        <taxon>Muridae</taxon>
        <taxon>Murinae</taxon>
        <taxon>Rattus</taxon>
    </lineage>
</organism>
<protein>
    <recommendedName>
        <fullName evidence="5">Probable UDP-sugar transporter protein SLC35A4</fullName>
    </recommendedName>
    <alternativeName>
        <fullName evidence="4">Complex leucine repeat protein</fullName>
    </alternativeName>
    <alternativeName>
        <fullName evidence="6">Solute carrier family 35 member A4</fullName>
    </alternativeName>
</protein>